<accession>B1X8Z1</accession>
<dbReference type="EC" id="7.1.1.-" evidence="1"/>
<dbReference type="EMBL" id="CP000948">
    <property type="protein sequence ID" value="ACB03438.1"/>
    <property type="molecule type" value="Genomic_DNA"/>
</dbReference>
<dbReference type="RefSeq" id="WP_000612644.1">
    <property type="nucleotide sequence ID" value="NC_010473.1"/>
</dbReference>
<dbReference type="SMR" id="B1X8Z1"/>
<dbReference type="GeneID" id="93033872"/>
<dbReference type="KEGG" id="ecd:ECDH10B_2441"/>
<dbReference type="HOGENOM" id="CLU_144724_0_1_6"/>
<dbReference type="GO" id="GO:0030964">
    <property type="term" value="C:NADH dehydrogenase complex"/>
    <property type="evidence" value="ECO:0007669"/>
    <property type="project" value="TreeGrafter"/>
</dbReference>
<dbReference type="GO" id="GO:0005886">
    <property type="term" value="C:plasma membrane"/>
    <property type="evidence" value="ECO:0007669"/>
    <property type="project" value="UniProtKB-SubCell"/>
</dbReference>
<dbReference type="GO" id="GO:0050136">
    <property type="term" value="F:NADH:ubiquinone reductase (non-electrogenic) activity"/>
    <property type="evidence" value="ECO:0007669"/>
    <property type="project" value="UniProtKB-UniRule"/>
</dbReference>
<dbReference type="GO" id="GO:0048038">
    <property type="term" value="F:quinone binding"/>
    <property type="evidence" value="ECO:0007669"/>
    <property type="project" value="UniProtKB-KW"/>
</dbReference>
<dbReference type="GO" id="GO:0042773">
    <property type="term" value="P:ATP synthesis coupled electron transport"/>
    <property type="evidence" value="ECO:0007669"/>
    <property type="project" value="InterPro"/>
</dbReference>
<dbReference type="FunFam" id="1.10.287.3510:FF:000001">
    <property type="entry name" value="NADH-quinone oxidoreductase subunit K"/>
    <property type="match status" value="1"/>
</dbReference>
<dbReference type="Gene3D" id="1.10.287.3510">
    <property type="match status" value="1"/>
</dbReference>
<dbReference type="HAMAP" id="MF_01456">
    <property type="entry name" value="NDH1_NuoK"/>
    <property type="match status" value="1"/>
</dbReference>
<dbReference type="InterPro" id="IPR001133">
    <property type="entry name" value="NADH_UbQ_OxRdtase_chain4L/K"/>
</dbReference>
<dbReference type="InterPro" id="IPR039428">
    <property type="entry name" value="NUOK/Mnh_C1-like"/>
</dbReference>
<dbReference type="NCBIfam" id="NF004319">
    <property type="entry name" value="PRK05715.1-1"/>
    <property type="match status" value="1"/>
</dbReference>
<dbReference type="NCBIfam" id="NF004320">
    <property type="entry name" value="PRK05715.1-2"/>
    <property type="match status" value="1"/>
</dbReference>
<dbReference type="PANTHER" id="PTHR11434:SF16">
    <property type="entry name" value="NADH-UBIQUINONE OXIDOREDUCTASE CHAIN 4L"/>
    <property type="match status" value="1"/>
</dbReference>
<dbReference type="PANTHER" id="PTHR11434">
    <property type="entry name" value="NADH-UBIQUINONE OXIDOREDUCTASE SUBUNIT ND4L"/>
    <property type="match status" value="1"/>
</dbReference>
<dbReference type="Pfam" id="PF00420">
    <property type="entry name" value="Oxidored_q2"/>
    <property type="match status" value="1"/>
</dbReference>
<reference key="1">
    <citation type="journal article" date="2008" name="J. Bacteriol.">
        <title>The complete genome sequence of Escherichia coli DH10B: insights into the biology of a laboratory workhorse.</title>
        <authorList>
            <person name="Durfee T."/>
            <person name="Nelson R."/>
            <person name="Baldwin S."/>
            <person name="Plunkett G. III"/>
            <person name="Burland V."/>
            <person name="Mau B."/>
            <person name="Petrosino J.F."/>
            <person name="Qin X."/>
            <person name="Muzny D.M."/>
            <person name="Ayele M."/>
            <person name="Gibbs R.A."/>
            <person name="Csorgo B."/>
            <person name="Posfai G."/>
            <person name="Weinstock G.M."/>
            <person name="Blattner F.R."/>
        </authorList>
    </citation>
    <scope>NUCLEOTIDE SEQUENCE [LARGE SCALE GENOMIC DNA]</scope>
    <source>
        <strain>K12 / DH10B</strain>
    </source>
</reference>
<name>NUOK_ECODH</name>
<feature type="chain" id="PRO_0000390045" description="NADH-quinone oxidoreductase subunit K">
    <location>
        <begin position="1"/>
        <end position="100"/>
    </location>
</feature>
<feature type="transmembrane region" description="Helical" evidence="1">
    <location>
        <begin position="4"/>
        <end position="24"/>
    </location>
</feature>
<feature type="transmembrane region" description="Helical" evidence="1">
    <location>
        <begin position="28"/>
        <end position="48"/>
    </location>
</feature>
<feature type="transmembrane region" description="Helical" evidence="1">
    <location>
        <begin position="60"/>
        <end position="80"/>
    </location>
</feature>
<organism>
    <name type="scientific">Escherichia coli (strain K12 / DH10B)</name>
    <dbReference type="NCBI Taxonomy" id="316385"/>
    <lineage>
        <taxon>Bacteria</taxon>
        <taxon>Pseudomonadati</taxon>
        <taxon>Pseudomonadota</taxon>
        <taxon>Gammaproteobacteria</taxon>
        <taxon>Enterobacterales</taxon>
        <taxon>Enterobacteriaceae</taxon>
        <taxon>Escherichia</taxon>
    </lineage>
</organism>
<protein>
    <recommendedName>
        <fullName evidence="1">NADH-quinone oxidoreductase subunit K</fullName>
        <ecNumber evidence="1">7.1.1.-</ecNumber>
    </recommendedName>
    <alternativeName>
        <fullName evidence="1">NADH dehydrogenase I subunit K</fullName>
    </alternativeName>
    <alternativeName>
        <fullName evidence="1">NDH-1 subunit K</fullName>
    </alternativeName>
</protein>
<sequence length="100" mass="10845">MIPLQHGLILAAILFVLGLTGLVIRRNLLFMLIGLEIMINASALAFVVAGSYWGQTDGQVMYILAISLAAAEASIGLALLLQLHRRRQNLNIDSVSEMRG</sequence>
<comment type="function">
    <text evidence="1">NDH-1 shuttles electrons from NADH, via FMN and iron-sulfur (Fe-S) centers, to quinones in the respiratory chain. The immediate electron acceptor for the enzyme in this species is believed to be ubiquinone. Couples the redox reaction to proton translocation (for every two electrons transferred, four hydrogen ions are translocated across the cytoplasmic membrane), and thus conserves the redox energy in a proton gradient.</text>
</comment>
<comment type="catalytic activity">
    <reaction evidence="1">
        <text>a quinone + NADH + 5 H(+)(in) = a quinol + NAD(+) + 4 H(+)(out)</text>
        <dbReference type="Rhea" id="RHEA:57888"/>
        <dbReference type="ChEBI" id="CHEBI:15378"/>
        <dbReference type="ChEBI" id="CHEBI:24646"/>
        <dbReference type="ChEBI" id="CHEBI:57540"/>
        <dbReference type="ChEBI" id="CHEBI:57945"/>
        <dbReference type="ChEBI" id="CHEBI:132124"/>
    </reaction>
</comment>
<comment type="subunit">
    <text evidence="1">NDH-1 is composed of 13 different subunits. Subunits NuoA, H, J, K, L, M, N constitute the membrane sector of the complex.</text>
</comment>
<comment type="subcellular location">
    <subcellularLocation>
        <location evidence="1">Cell inner membrane</location>
        <topology evidence="1">Multi-pass membrane protein</topology>
    </subcellularLocation>
</comment>
<comment type="similarity">
    <text evidence="1">Belongs to the complex I subunit 4L family.</text>
</comment>
<evidence type="ECO:0000255" key="1">
    <source>
        <dbReference type="HAMAP-Rule" id="MF_01456"/>
    </source>
</evidence>
<gene>
    <name evidence="1" type="primary">nuoK</name>
    <name type="ordered locus">ECDH10B_2441</name>
</gene>
<proteinExistence type="inferred from homology"/>
<keyword id="KW-0997">Cell inner membrane</keyword>
<keyword id="KW-1003">Cell membrane</keyword>
<keyword id="KW-0472">Membrane</keyword>
<keyword id="KW-0520">NAD</keyword>
<keyword id="KW-0874">Quinone</keyword>
<keyword id="KW-1278">Translocase</keyword>
<keyword id="KW-0812">Transmembrane</keyword>
<keyword id="KW-1133">Transmembrane helix</keyword>
<keyword id="KW-0813">Transport</keyword>
<keyword id="KW-0830">Ubiquinone</keyword>